<accession>P73554</accession>
<gene>
    <name evidence="1" type="primary">ruvA</name>
    <name type="ordered locus">sll0876</name>
</gene>
<proteinExistence type="inferred from homology"/>
<feature type="chain" id="PRO_0000094699" description="Holliday junction branch migration complex subunit RuvA">
    <location>
        <begin position="1"/>
        <end position="211"/>
    </location>
</feature>
<feature type="region of interest" description="Domain I" evidence="1">
    <location>
        <begin position="1"/>
        <end position="70"/>
    </location>
</feature>
<feature type="region of interest" description="Domain II" evidence="1">
    <location>
        <begin position="71"/>
        <end position="149"/>
    </location>
</feature>
<feature type="region of interest" description="Flexible linker" evidence="1">
    <location>
        <begin position="150"/>
        <end position="158"/>
    </location>
</feature>
<feature type="region of interest" description="Domain III" evidence="1">
    <location>
        <begin position="158"/>
        <end position="211"/>
    </location>
</feature>
<name>RUVA_SYNY3</name>
<comment type="function">
    <text evidence="1">The RuvA-RuvB-RuvC complex processes Holliday junction (HJ) DNA during genetic recombination and DNA repair, while the RuvA-RuvB complex plays an important role in the rescue of blocked DNA replication forks via replication fork reversal (RFR). RuvA specifically binds to HJ cruciform DNA, conferring on it an open structure. The RuvB hexamer acts as an ATP-dependent pump, pulling dsDNA into and through the RuvAB complex. HJ branch migration allows RuvC to scan DNA until it finds its consensus sequence, where it cleaves and resolves the cruciform DNA.</text>
</comment>
<comment type="subunit">
    <text evidence="1">Homotetramer. Forms an RuvA(8)-RuvB(12)-Holliday junction (HJ) complex. HJ DNA is sandwiched between 2 RuvA tetramers; dsDNA enters through RuvA and exits via RuvB. An RuvB hexamer assembles on each DNA strand where it exits the tetramer. Each RuvB hexamer is contacted by two RuvA subunits (via domain III) on 2 adjacent RuvB subunits; this complex drives branch migration. In the full resolvosome a probable DNA-RuvA(4)-RuvB(12)-RuvC(2) complex forms which resolves the HJ.</text>
</comment>
<comment type="subcellular location">
    <subcellularLocation>
        <location evidence="1">Cytoplasm</location>
    </subcellularLocation>
</comment>
<comment type="domain">
    <text evidence="1">Has three domains with a flexible linker between the domains II and III and assumes an 'L' shape. Domain III is highly mobile and contacts RuvB.</text>
</comment>
<comment type="miscellaneous">
    <text evidence="2">This bacterium is considerably more resistant to UV and gamma irradiation than E.coli; the E.coli-like SOS regulon model is not an appropriate model for DNA repair in this cyanobacterium.</text>
</comment>
<comment type="similarity">
    <text evidence="1">Belongs to the RuvA family.</text>
</comment>
<sequence length="211" mass="23190">MIQFLQGQVVTVTKNIQNRWFLILSVNGVGYELQVPHSLAQQWTPPPPEPQQVFTHLLVRQDQIALFGFGRLAERDLFGQLMGVTGIGAQLAIALIETLGLEGLVQAVVTGNVKQLCQTPGVGKKGAERLALELKTKLSQWHKLQMGTGETDSTLPTTALLEDLEMTLLALGYTQTEIQQAIAMVSQVPDVAQSEDPEVWIRQAIGWLSDH</sequence>
<dbReference type="EMBL" id="BA000022">
    <property type="protein sequence ID" value="BAA17594.1"/>
    <property type="molecule type" value="Genomic_DNA"/>
</dbReference>
<dbReference type="PIR" id="S77260">
    <property type="entry name" value="S77260"/>
</dbReference>
<dbReference type="SMR" id="P73554"/>
<dbReference type="FunCoup" id="P73554">
    <property type="interactions" value="345"/>
</dbReference>
<dbReference type="STRING" id="1148.gene:10498461"/>
<dbReference type="PaxDb" id="1148-1652674"/>
<dbReference type="EnsemblBacteria" id="BAA17594">
    <property type="protein sequence ID" value="BAA17594"/>
    <property type="gene ID" value="BAA17594"/>
</dbReference>
<dbReference type="KEGG" id="syn:sll0876"/>
<dbReference type="eggNOG" id="COG0632">
    <property type="taxonomic scope" value="Bacteria"/>
</dbReference>
<dbReference type="InParanoid" id="P73554"/>
<dbReference type="PhylomeDB" id="P73554"/>
<dbReference type="Proteomes" id="UP000001425">
    <property type="component" value="Chromosome"/>
</dbReference>
<dbReference type="GO" id="GO:0005737">
    <property type="term" value="C:cytoplasm"/>
    <property type="evidence" value="ECO:0007669"/>
    <property type="project" value="UniProtKB-SubCell"/>
</dbReference>
<dbReference type="GO" id="GO:0009379">
    <property type="term" value="C:Holliday junction helicase complex"/>
    <property type="evidence" value="ECO:0007669"/>
    <property type="project" value="InterPro"/>
</dbReference>
<dbReference type="GO" id="GO:0048476">
    <property type="term" value="C:Holliday junction resolvase complex"/>
    <property type="evidence" value="ECO:0007669"/>
    <property type="project" value="UniProtKB-UniRule"/>
</dbReference>
<dbReference type="GO" id="GO:0005524">
    <property type="term" value="F:ATP binding"/>
    <property type="evidence" value="ECO:0007669"/>
    <property type="project" value="InterPro"/>
</dbReference>
<dbReference type="GO" id="GO:0000400">
    <property type="term" value="F:four-way junction DNA binding"/>
    <property type="evidence" value="ECO:0007669"/>
    <property type="project" value="UniProtKB-UniRule"/>
</dbReference>
<dbReference type="GO" id="GO:0009378">
    <property type="term" value="F:four-way junction helicase activity"/>
    <property type="evidence" value="ECO:0000318"/>
    <property type="project" value="GO_Central"/>
</dbReference>
<dbReference type="GO" id="GO:0006310">
    <property type="term" value="P:DNA recombination"/>
    <property type="evidence" value="ECO:0007669"/>
    <property type="project" value="UniProtKB-UniRule"/>
</dbReference>
<dbReference type="GO" id="GO:0006281">
    <property type="term" value="P:DNA repair"/>
    <property type="evidence" value="ECO:0007669"/>
    <property type="project" value="UniProtKB-UniRule"/>
</dbReference>
<dbReference type="GO" id="GO:0009432">
    <property type="term" value="P:SOS response"/>
    <property type="evidence" value="ECO:0000318"/>
    <property type="project" value="GO_Central"/>
</dbReference>
<dbReference type="CDD" id="cd14332">
    <property type="entry name" value="UBA_RuvA_C"/>
    <property type="match status" value="1"/>
</dbReference>
<dbReference type="Gene3D" id="1.10.150.20">
    <property type="entry name" value="5' to 3' exonuclease, C-terminal subdomain"/>
    <property type="match status" value="1"/>
</dbReference>
<dbReference type="Gene3D" id="2.40.50.140">
    <property type="entry name" value="Nucleic acid-binding proteins"/>
    <property type="match status" value="1"/>
</dbReference>
<dbReference type="HAMAP" id="MF_00031">
    <property type="entry name" value="DNA_HJ_migration_RuvA"/>
    <property type="match status" value="1"/>
</dbReference>
<dbReference type="InterPro" id="IPR013849">
    <property type="entry name" value="DNA_helicase_Holl-junc_RuvA_I"/>
</dbReference>
<dbReference type="InterPro" id="IPR003583">
    <property type="entry name" value="Hlx-hairpin-Hlx_DNA-bd_motif"/>
</dbReference>
<dbReference type="InterPro" id="IPR012340">
    <property type="entry name" value="NA-bd_OB-fold"/>
</dbReference>
<dbReference type="InterPro" id="IPR000085">
    <property type="entry name" value="RuvA"/>
</dbReference>
<dbReference type="InterPro" id="IPR010994">
    <property type="entry name" value="RuvA_2-like"/>
</dbReference>
<dbReference type="InterPro" id="IPR011114">
    <property type="entry name" value="RuvA_C"/>
</dbReference>
<dbReference type="NCBIfam" id="TIGR00084">
    <property type="entry name" value="ruvA"/>
    <property type="match status" value="1"/>
</dbReference>
<dbReference type="Pfam" id="PF14520">
    <property type="entry name" value="HHH_5"/>
    <property type="match status" value="1"/>
</dbReference>
<dbReference type="Pfam" id="PF07499">
    <property type="entry name" value="RuvA_C"/>
    <property type="match status" value="1"/>
</dbReference>
<dbReference type="Pfam" id="PF01330">
    <property type="entry name" value="RuvA_N"/>
    <property type="match status" value="1"/>
</dbReference>
<dbReference type="SMART" id="SM00278">
    <property type="entry name" value="HhH1"/>
    <property type="match status" value="2"/>
</dbReference>
<dbReference type="SUPFAM" id="SSF50249">
    <property type="entry name" value="Nucleic acid-binding proteins"/>
    <property type="match status" value="1"/>
</dbReference>
<dbReference type="SUPFAM" id="SSF47781">
    <property type="entry name" value="RuvA domain 2-like"/>
    <property type="match status" value="1"/>
</dbReference>
<organism>
    <name type="scientific">Synechocystis sp. (strain ATCC 27184 / PCC 6803 / Kazusa)</name>
    <dbReference type="NCBI Taxonomy" id="1111708"/>
    <lineage>
        <taxon>Bacteria</taxon>
        <taxon>Bacillati</taxon>
        <taxon>Cyanobacteriota</taxon>
        <taxon>Cyanophyceae</taxon>
        <taxon>Synechococcales</taxon>
        <taxon>Merismopediaceae</taxon>
        <taxon>Synechocystis</taxon>
    </lineage>
</organism>
<keyword id="KW-0963">Cytoplasm</keyword>
<keyword id="KW-0227">DNA damage</keyword>
<keyword id="KW-0233">DNA recombination</keyword>
<keyword id="KW-0234">DNA repair</keyword>
<keyword id="KW-0238">DNA-binding</keyword>
<keyword id="KW-1185">Reference proteome</keyword>
<evidence type="ECO:0000255" key="1">
    <source>
        <dbReference type="HAMAP-Rule" id="MF_00031"/>
    </source>
</evidence>
<evidence type="ECO:0000305" key="2">
    <source>
    </source>
</evidence>
<protein>
    <recommendedName>
        <fullName evidence="1">Holliday junction branch migration complex subunit RuvA</fullName>
    </recommendedName>
</protein>
<reference key="1">
    <citation type="journal article" date="1996" name="DNA Res.">
        <title>Sequence analysis of the genome of the unicellular cyanobacterium Synechocystis sp. strain PCC6803. II. Sequence determination of the entire genome and assignment of potential protein-coding regions.</title>
        <authorList>
            <person name="Kaneko T."/>
            <person name="Sato S."/>
            <person name="Kotani H."/>
            <person name="Tanaka A."/>
            <person name="Asamizu E."/>
            <person name="Nakamura Y."/>
            <person name="Miyajima N."/>
            <person name="Hirosawa M."/>
            <person name="Sugiura M."/>
            <person name="Sasamoto S."/>
            <person name="Kimura T."/>
            <person name="Hosouchi T."/>
            <person name="Matsuno A."/>
            <person name="Muraki A."/>
            <person name="Nakazaki N."/>
            <person name="Naruo K."/>
            <person name="Okumura S."/>
            <person name="Shimpo S."/>
            <person name="Takeuchi C."/>
            <person name="Wada T."/>
            <person name="Watanabe A."/>
            <person name="Yamada M."/>
            <person name="Yasuda M."/>
            <person name="Tabata S."/>
        </authorList>
    </citation>
    <scope>NUCLEOTIDE SEQUENCE [LARGE SCALE GENOMIC DNA]</scope>
    <source>
        <strain>ATCC 27184 / PCC 6803 / Kazusa</strain>
    </source>
</reference>
<reference key="2">
    <citation type="journal article" date="2004" name="Mol. Microbiol.">
        <title>Function and regulation of the cyanobacterial genes lexA, recA and ruvB: LexA is critical to the survival of cells facing inorganic carbon starvation.</title>
        <authorList>
            <person name="Domain F."/>
            <person name="Houot L."/>
            <person name="Chauvat F."/>
            <person name="Cassier-Chauvat C."/>
        </authorList>
    </citation>
    <scope>DISCUSSION OF SOS REGULON</scope>
    <source>
        <strain>ATCC 27184 / PCC 6803 / Kazusa</strain>
    </source>
</reference>